<name>BIOB_PSEAB</name>
<evidence type="ECO:0000255" key="1">
    <source>
        <dbReference type="HAMAP-Rule" id="MF_01694"/>
    </source>
</evidence>
<evidence type="ECO:0000255" key="2">
    <source>
        <dbReference type="PROSITE-ProRule" id="PRU01266"/>
    </source>
</evidence>
<accession>Q02TR6</accession>
<sequence>MSATASVATRHDWSLAEVRALFEQPFNDLLFQAQTVHRAYFDPNRVQVSTLLSIKTGACPEDCKYCPQSGHYNTGLDKEKLMEVQKVLEAAAEAKAIGSTRFCMGAAWKHPSAKDMPYVLEMVKGVKKLGLETCMTLGRLTQEQTQALADAGLDYYNHNLDTSPEFYGNIITTRTYSERLQTLAYVREAGMKICSGGILGMGESVDDRAGLLIQLANLPEHPESVPINMLVKVKGTPLAEEKDVDPFDFIRTLAVARIMMPKSHVRLSAGREQMNEQMQALAFMAGANSIFYGEKLLTTKNPQAEKDMQLFARLGIKPEEREEHADEVHQAAIEQALVEQRESKLFYNAASA</sequence>
<organism>
    <name type="scientific">Pseudomonas aeruginosa (strain UCBPP-PA14)</name>
    <dbReference type="NCBI Taxonomy" id="208963"/>
    <lineage>
        <taxon>Bacteria</taxon>
        <taxon>Pseudomonadati</taxon>
        <taxon>Pseudomonadota</taxon>
        <taxon>Gammaproteobacteria</taxon>
        <taxon>Pseudomonadales</taxon>
        <taxon>Pseudomonadaceae</taxon>
        <taxon>Pseudomonas</taxon>
    </lineage>
</organism>
<proteinExistence type="inferred from homology"/>
<comment type="function">
    <text evidence="1">Catalyzes the conversion of dethiobiotin (DTB) to biotin by the insertion of a sulfur atom into dethiobiotin via a radical-based mechanism.</text>
</comment>
<comment type="catalytic activity">
    <reaction evidence="1">
        <text>(4R,5S)-dethiobiotin + (sulfur carrier)-SH + 2 reduced [2Fe-2S]-[ferredoxin] + 2 S-adenosyl-L-methionine = (sulfur carrier)-H + biotin + 2 5'-deoxyadenosine + 2 L-methionine + 2 oxidized [2Fe-2S]-[ferredoxin]</text>
        <dbReference type="Rhea" id="RHEA:22060"/>
        <dbReference type="Rhea" id="RHEA-COMP:10000"/>
        <dbReference type="Rhea" id="RHEA-COMP:10001"/>
        <dbReference type="Rhea" id="RHEA-COMP:14737"/>
        <dbReference type="Rhea" id="RHEA-COMP:14739"/>
        <dbReference type="ChEBI" id="CHEBI:17319"/>
        <dbReference type="ChEBI" id="CHEBI:29917"/>
        <dbReference type="ChEBI" id="CHEBI:33737"/>
        <dbReference type="ChEBI" id="CHEBI:33738"/>
        <dbReference type="ChEBI" id="CHEBI:57586"/>
        <dbReference type="ChEBI" id="CHEBI:57844"/>
        <dbReference type="ChEBI" id="CHEBI:59789"/>
        <dbReference type="ChEBI" id="CHEBI:64428"/>
        <dbReference type="ChEBI" id="CHEBI:149473"/>
        <dbReference type="EC" id="2.8.1.6"/>
    </reaction>
</comment>
<comment type="cofactor">
    <cofactor evidence="1">
        <name>[4Fe-4S] cluster</name>
        <dbReference type="ChEBI" id="CHEBI:49883"/>
    </cofactor>
    <text evidence="1">Binds 1 [4Fe-4S] cluster. The cluster is coordinated with 3 cysteines and an exchangeable S-adenosyl-L-methionine.</text>
</comment>
<comment type="cofactor">
    <cofactor evidence="1">
        <name>[2Fe-2S] cluster</name>
        <dbReference type="ChEBI" id="CHEBI:190135"/>
    </cofactor>
    <text evidence="1">Binds 1 [2Fe-2S] cluster. The cluster is coordinated with 3 cysteines and 1 arginine.</text>
</comment>
<comment type="pathway">
    <text evidence="1">Cofactor biosynthesis; biotin biosynthesis; biotin from 7,8-diaminononanoate: step 2/2.</text>
</comment>
<comment type="subunit">
    <text evidence="1">Homodimer.</text>
</comment>
<comment type="similarity">
    <text evidence="1">Belongs to the radical SAM superfamily. Biotin synthase family.</text>
</comment>
<feature type="chain" id="PRO_0000381554" description="Biotin synthase">
    <location>
        <begin position="1"/>
        <end position="352"/>
    </location>
</feature>
<feature type="domain" description="Radical SAM core" evidence="2">
    <location>
        <begin position="44"/>
        <end position="262"/>
    </location>
</feature>
<feature type="binding site" evidence="1">
    <location>
        <position position="59"/>
    </location>
    <ligand>
        <name>[4Fe-4S] cluster</name>
        <dbReference type="ChEBI" id="CHEBI:49883"/>
        <note>4Fe-4S-S-AdoMet</note>
    </ligand>
</feature>
<feature type="binding site" evidence="1">
    <location>
        <position position="63"/>
    </location>
    <ligand>
        <name>[4Fe-4S] cluster</name>
        <dbReference type="ChEBI" id="CHEBI:49883"/>
        <note>4Fe-4S-S-AdoMet</note>
    </ligand>
</feature>
<feature type="binding site" evidence="1">
    <location>
        <position position="66"/>
    </location>
    <ligand>
        <name>[4Fe-4S] cluster</name>
        <dbReference type="ChEBI" id="CHEBI:49883"/>
        <note>4Fe-4S-S-AdoMet</note>
    </ligand>
</feature>
<feature type="binding site" evidence="1">
    <location>
        <position position="103"/>
    </location>
    <ligand>
        <name>[2Fe-2S] cluster</name>
        <dbReference type="ChEBI" id="CHEBI:190135"/>
    </ligand>
</feature>
<feature type="binding site" evidence="1">
    <location>
        <position position="134"/>
    </location>
    <ligand>
        <name>[2Fe-2S] cluster</name>
        <dbReference type="ChEBI" id="CHEBI:190135"/>
    </ligand>
</feature>
<feature type="binding site" evidence="1">
    <location>
        <position position="194"/>
    </location>
    <ligand>
        <name>[2Fe-2S] cluster</name>
        <dbReference type="ChEBI" id="CHEBI:190135"/>
    </ligand>
</feature>
<feature type="binding site" evidence="1">
    <location>
        <position position="266"/>
    </location>
    <ligand>
        <name>[2Fe-2S] cluster</name>
        <dbReference type="ChEBI" id="CHEBI:190135"/>
    </ligand>
</feature>
<protein>
    <recommendedName>
        <fullName evidence="1">Biotin synthase</fullName>
        <ecNumber evidence="1">2.8.1.6</ecNumber>
    </recommendedName>
</protein>
<reference key="1">
    <citation type="journal article" date="2006" name="Genome Biol.">
        <title>Genomic analysis reveals that Pseudomonas aeruginosa virulence is combinatorial.</title>
        <authorList>
            <person name="Lee D.G."/>
            <person name="Urbach J.M."/>
            <person name="Wu G."/>
            <person name="Liberati N.T."/>
            <person name="Feinbaum R.L."/>
            <person name="Miyata S."/>
            <person name="Diggins L.T."/>
            <person name="He J."/>
            <person name="Saucier M."/>
            <person name="Deziel E."/>
            <person name="Friedman L."/>
            <person name="Li L."/>
            <person name="Grills G."/>
            <person name="Montgomery K."/>
            <person name="Kucherlapati R."/>
            <person name="Rahme L.G."/>
            <person name="Ausubel F.M."/>
        </authorList>
    </citation>
    <scope>NUCLEOTIDE SEQUENCE [LARGE SCALE GENOMIC DNA]</scope>
    <source>
        <strain>UCBPP-PA14</strain>
    </source>
</reference>
<dbReference type="EC" id="2.8.1.6" evidence="1"/>
<dbReference type="EMBL" id="CP000438">
    <property type="protein sequence ID" value="ABJ15462.1"/>
    <property type="molecule type" value="Genomic_DNA"/>
</dbReference>
<dbReference type="RefSeq" id="WP_003084824.1">
    <property type="nucleotide sequence ID" value="NZ_CP034244.1"/>
</dbReference>
<dbReference type="SMR" id="Q02TR6"/>
<dbReference type="KEGG" id="pau:PA14_06500"/>
<dbReference type="PseudoCAP" id="PA14_06500"/>
<dbReference type="HOGENOM" id="CLU_033172_1_2_6"/>
<dbReference type="BioCyc" id="PAER208963:G1G74-538-MONOMER"/>
<dbReference type="UniPathway" id="UPA00078">
    <property type="reaction ID" value="UER00162"/>
</dbReference>
<dbReference type="Proteomes" id="UP000000653">
    <property type="component" value="Chromosome"/>
</dbReference>
<dbReference type="GO" id="GO:0051537">
    <property type="term" value="F:2 iron, 2 sulfur cluster binding"/>
    <property type="evidence" value="ECO:0007669"/>
    <property type="project" value="UniProtKB-KW"/>
</dbReference>
<dbReference type="GO" id="GO:0051539">
    <property type="term" value="F:4 iron, 4 sulfur cluster binding"/>
    <property type="evidence" value="ECO:0007669"/>
    <property type="project" value="UniProtKB-KW"/>
</dbReference>
<dbReference type="GO" id="GO:0004076">
    <property type="term" value="F:biotin synthase activity"/>
    <property type="evidence" value="ECO:0007669"/>
    <property type="project" value="UniProtKB-UniRule"/>
</dbReference>
<dbReference type="GO" id="GO:0005506">
    <property type="term" value="F:iron ion binding"/>
    <property type="evidence" value="ECO:0007669"/>
    <property type="project" value="UniProtKB-UniRule"/>
</dbReference>
<dbReference type="GO" id="GO:0009102">
    <property type="term" value="P:biotin biosynthetic process"/>
    <property type="evidence" value="ECO:0007669"/>
    <property type="project" value="UniProtKB-UniRule"/>
</dbReference>
<dbReference type="CDD" id="cd01335">
    <property type="entry name" value="Radical_SAM"/>
    <property type="match status" value="1"/>
</dbReference>
<dbReference type="FunFam" id="3.20.20.70:FF:000011">
    <property type="entry name" value="Biotin synthase"/>
    <property type="match status" value="1"/>
</dbReference>
<dbReference type="Gene3D" id="3.20.20.70">
    <property type="entry name" value="Aldolase class I"/>
    <property type="match status" value="1"/>
</dbReference>
<dbReference type="HAMAP" id="MF_01694">
    <property type="entry name" value="BioB"/>
    <property type="match status" value="1"/>
</dbReference>
<dbReference type="InterPro" id="IPR013785">
    <property type="entry name" value="Aldolase_TIM"/>
</dbReference>
<dbReference type="InterPro" id="IPR010722">
    <property type="entry name" value="BATS_dom"/>
</dbReference>
<dbReference type="InterPro" id="IPR002684">
    <property type="entry name" value="Biotin_synth/BioAB"/>
</dbReference>
<dbReference type="InterPro" id="IPR024177">
    <property type="entry name" value="Biotin_synthase"/>
</dbReference>
<dbReference type="InterPro" id="IPR006638">
    <property type="entry name" value="Elp3/MiaA/NifB-like_rSAM"/>
</dbReference>
<dbReference type="InterPro" id="IPR007197">
    <property type="entry name" value="rSAM"/>
</dbReference>
<dbReference type="NCBIfam" id="TIGR00433">
    <property type="entry name" value="bioB"/>
    <property type="match status" value="1"/>
</dbReference>
<dbReference type="PANTHER" id="PTHR22976">
    <property type="entry name" value="BIOTIN SYNTHASE"/>
    <property type="match status" value="1"/>
</dbReference>
<dbReference type="PANTHER" id="PTHR22976:SF2">
    <property type="entry name" value="BIOTIN SYNTHASE, MITOCHONDRIAL"/>
    <property type="match status" value="1"/>
</dbReference>
<dbReference type="Pfam" id="PF06968">
    <property type="entry name" value="BATS"/>
    <property type="match status" value="1"/>
</dbReference>
<dbReference type="Pfam" id="PF04055">
    <property type="entry name" value="Radical_SAM"/>
    <property type="match status" value="1"/>
</dbReference>
<dbReference type="PIRSF" id="PIRSF001619">
    <property type="entry name" value="Biotin_synth"/>
    <property type="match status" value="1"/>
</dbReference>
<dbReference type="SFLD" id="SFLDG01060">
    <property type="entry name" value="BATS_domain_containing"/>
    <property type="match status" value="1"/>
</dbReference>
<dbReference type="SFLD" id="SFLDF00272">
    <property type="entry name" value="biotin_synthase"/>
    <property type="match status" value="1"/>
</dbReference>
<dbReference type="SMART" id="SM00876">
    <property type="entry name" value="BATS"/>
    <property type="match status" value="1"/>
</dbReference>
<dbReference type="SMART" id="SM00729">
    <property type="entry name" value="Elp3"/>
    <property type="match status" value="1"/>
</dbReference>
<dbReference type="SUPFAM" id="SSF102114">
    <property type="entry name" value="Radical SAM enzymes"/>
    <property type="match status" value="1"/>
</dbReference>
<dbReference type="PROSITE" id="PS51918">
    <property type="entry name" value="RADICAL_SAM"/>
    <property type="match status" value="1"/>
</dbReference>
<keyword id="KW-0001">2Fe-2S</keyword>
<keyword id="KW-0004">4Fe-4S</keyword>
<keyword id="KW-0093">Biotin biosynthesis</keyword>
<keyword id="KW-0408">Iron</keyword>
<keyword id="KW-0411">Iron-sulfur</keyword>
<keyword id="KW-0479">Metal-binding</keyword>
<keyword id="KW-0949">S-adenosyl-L-methionine</keyword>
<keyword id="KW-0808">Transferase</keyword>
<gene>
    <name evidence="1" type="primary">bioB</name>
    <name type="ordered locus">PA14_06500</name>
</gene>